<name>TEAD1_MOUSE</name>
<protein>
    <recommendedName>
        <fullName>Transcriptional enhancer factor TEF-1</fullName>
    </recommendedName>
    <alternativeName>
        <fullName>NTEF-1</fullName>
    </alternativeName>
    <alternativeName>
        <fullName>Protein GT-IIC</fullName>
    </alternativeName>
    <alternativeName>
        <fullName>TEA domain family member 1</fullName>
        <shortName>TEAD-1</shortName>
    </alternativeName>
    <alternativeName>
        <fullName>Transcription factor 13</fullName>
        <shortName>TCF-13</shortName>
    </alternativeName>
</protein>
<accession>P30051</accession>
<comment type="function">
    <text evidence="1">Transcription factor which plays a key role in the Hippo signaling pathway, a pathway involved in organ size control and tumor suppression by restricting proliferation and promoting apoptosis. The core of this pathway is composed of a kinase cascade wherein MST1/MST2, in complex with its regulatory protein SAV1, phosphorylates and activates LATS1/2 in complex with its regulatory protein MOB1, which in turn phosphorylates and inactivates YAP1 oncoprotein and WWTR1/TAZ. Acts by mediating gene expression of YAP1 and WWTR1/TAZ, thereby regulating cell proliferation, migration and epithelial mesenchymal transition (EMT) induction. Binds specifically and cooperatively to the SPH and GT-IIC 'enhansons' (5'-GTGGAATGT-3') and activates transcription in vivo in a cell-specific manner. The activation function appears to be mediated by a limiting cell-specific transcriptional intermediary factor (TIF). Involved in cardiac development. Binds to the M-CAT motif (By similarity).</text>
</comment>
<comment type="subunit">
    <text evidence="1">Interacts with YAP1 and WWTR1/TAZ.</text>
</comment>
<comment type="interaction">
    <interactant intactId="EBI-3953905">
        <id>P30051</id>
    </interactant>
    <interactant intactId="EBI-1211949">
        <id>P46938</id>
        <label>Yap1</label>
    </interactant>
    <organismsDiffer>false</organismsDiffer>
    <experiments>4</experiments>
</comment>
<comment type="subcellular location">
    <subcellularLocation>
        <location evidence="2">Nucleus</location>
    </subcellularLocation>
</comment>
<comment type="tissue specificity">
    <text>In developing skeletal muscle and myocardium, in mitotic neuroblasts both in the brain and spinal cord. At later stages of embryogenesis expressed in several developing structures such as the olfactory system, the intestine, and the kidney.</text>
</comment>
<comment type="PTM">
    <text evidence="2">Lactylation by AARS1 promotes nuclear localization and stabilization of YAP1, leading to increased Hippo signaling pathway. Delactylated by SIRT1.</text>
</comment>
<comment type="caution">
    <text evidence="6">It is uncertain whether Met-1 or Met-16 is the initiator.</text>
</comment>
<comment type="sequence caution" evidence="6">
    <conflict type="miscellaneous discrepancy">
        <sequence resource="EMBL-CDS" id="AAA40410"/>
    </conflict>
    <text>Unusual initiator. The initiator methionine is coded by a non-canonical ATT isoleucine codon.</text>
</comment>
<comment type="sequence caution" evidence="6">
    <conflict type="miscellaneous discrepancy">
        <sequence resource="EMBL-CDS" id="AAA40411"/>
    </conflict>
    <text>Unusual initiator. The initiator methionine is coded by a non-canonical ATT isoleucine codon.</text>
</comment>
<comment type="sequence caution" evidence="6">
    <conflict type="miscellaneous discrepancy">
        <sequence resource="EMBL-CDS" id="AAB32420"/>
    </conflict>
    <text>Unusual initiator. The initiator methionine is coded by a non-canonical ATT isoleucine codon.</text>
</comment>
<feature type="chain" id="PRO_0000205931" description="Transcriptional enhancer factor TEF-1">
    <location>
        <begin position="1"/>
        <end position="426"/>
    </location>
</feature>
<feature type="DNA-binding region" description="TEA" evidence="4">
    <location>
        <begin position="28"/>
        <end position="104"/>
    </location>
</feature>
<feature type="region of interest" description="Disordered" evidence="5">
    <location>
        <begin position="1"/>
        <end position="31"/>
    </location>
</feature>
<feature type="region of interest" description="Transcriptional activation" evidence="3">
    <location>
        <begin position="167"/>
        <end position="426"/>
    </location>
</feature>
<feature type="compositionally biased region" description="Polar residues" evidence="5">
    <location>
        <begin position="1"/>
        <end position="12"/>
    </location>
</feature>
<feature type="compositionally biased region" description="Basic and acidic residues" evidence="5">
    <location>
        <begin position="15"/>
        <end position="28"/>
    </location>
</feature>
<feature type="modified residue" description="N-acetylmethionine" evidence="2">
    <location>
        <position position="1"/>
    </location>
</feature>
<feature type="modified residue" description="Phosphoserine" evidence="2">
    <location>
        <position position="11"/>
    </location>
</feature>
<feature type="modified residue" description="N6-lactoyllysine" evidence="2">
    <location>
        <position position="108"/>
    </location>
</feature>
<feature type="sequence conflict" description="In Ref. 3; AAB32420." evidence="6" ref="3">
    <original>SE</original>
    <variation>RR</variation>
    <location>
        <begin position="9"/>
        <end position="10"/>
    </location>
</feature>
<feature type="sequence conflict" description="In Ref. 2; AAA40411." evidence="6" ref="2">
    <original>K</original>
    <variation>KVTSM</variation>
    <location>
        <position position="110"/>
    </location>
</feature>
<organism>
    <name type="scientific">Mus musculus</name>
    <name type="common">Mouse</name>
    <dbReference type="NCBI Taxonomy" id="10090"/>
    <lineage>
        <taxon>Eukaryota</taxon>
        <taxon>Metazoa</taxon>
        <taxon>Chordata</taxon>
        <taxon>Craniata</taxon>
        <taxon>Vertebrata</taxon>
        <taxon>Euteleostomi</taxon>
        <taxon>Mammalia</taxon>
        <taxon>Eutheria</taxon>
        <taxon>Euarchontoglires</taxon>
        <taxon>Glires</taxon>
        <taxon>Rodentia</taxon>
        <taxon>Myomorpha</taxon>
        <taxon>Muroidea</taxon>
        <taxon>Muridae</taxon>
        <taxon>Murinae</taxon>
        <taxon>Mus</taxon>
        <taxon>Mus</taxon>
    </lineage>
</organism>
<gene>
    <name type="primary">Tead1</name>
    <name type="synonym">Tcf13</name>
    <name type="synonym">Tef-1</name>
    <name type="synonym">Tef1</name>
</gene>
<sequence length="426" mass="47948">MEPSSWSGSESPAENMERMSDSADKPIDNDAEGVWSPDIEQSFQEALAIYPPCGRRKIILSDEGKMYGRNELIARYIKLRTGKTRTRKQVSSHIQVLARRKSRDFHSKLKDQTAKDKALQHMAAMSSAQIVSATAIHNKLGLPGIPRPTFPGGPGFWPGMIQTGQPGSSQDVKPFVQQAYPIQPAVTAPIPGFEPTSAPAPSVPAWQGRSIGTTKLRLVEFSAFLEQQRDPDSYNKHLFVHIGHANHSYSDPLLESVDIRQIYDKFPEKKGGLKELFGKGPQNAFFLVKFWADLNCNIQDDAGAFYGVSSQYESSENMTVTCSTKVCSFGKQVVEKVETEYARFENGRFVYRINRSPMCEYMINFIHKLKHLPEKYMMNSVLENFTILLVVTNRDTQETLLCMACVFEVSNSEHGAQHHIYRLVKD</sequence>
<evidence type="ECO:0000250" key="1"/>
<evidence type="ECO:0000250" key="2">
    <source>
        <dbReference type="UniProtKB" id="P28347"/>
    </source>
</evidence>
<evidence type="ECO:0000255" key="3"/>
<evidence type="ECO:0000255" key="4">
    <source>
        <dbReference type="PROSITE-ProRule" id="PRU00505"/>
    </source>
</evidence>
<evidence type="ECO:0000256" key="5">
    <source>
        <dbReference type="SAM" id="MobiDB-lite"/>
    </source>
</evidence>
<evidence type="ECO:0000305" key="6"/>
<dbReference type="EMBL" id="L06865">
    <property type="protein sequence ID" value="AAA40410.1"/>
    <property type="status" value="ALT_SEQ"/>
    <property type="molecule type" value="mRNA"/>
</dbReference>
<dbReference type="EMBL" id="L13853">
    <property type="protein sequence ID" value="AAA40411.1"/>
    <property type="status" value="ALT_SEQ"/>
    <property type="molecule type" value="mRNA"/>
</dbReference>
<dbReference type="EMBL" id="S74227">
    <property type="protein sequence ID" value="AAB32420.1"/>
    <property type="status" value="ALT_SEQ"/>
    <property type="molecule type" value="mRNA"/>
</dbReference>
<dbReference type="CCDS" id="CCDS52367.1"/>
<dbReference type="PIR" id="A54882">
    <property type="entry name" value="A54882"/>
</dbReference>
<dbReference type="PIR" id="S40779">
    <property type="entry name" value="S40779"/>
</dbReference>
<dbReference type="PIR" id="S41767">
    <property type="entry name" value="S41767"/>
</dbReference>
<dbReference type="RefSeq" id="NP_001160057.2">
    <property type="nucleotide sequence ID" value="NM_001166585.2"/>
</dbReference>
<dbReference type="SMR" id="P30051"/>
<dbReference type="BioGRID" id="204098">
    <property type="interactions" value="16"/>
</dbReference>
<dbReference type="ComplexPortal" id="CPX-394">
    <property type="entry name" value="YAP1-TEAD1 transcription factor complex"/>
</dbReference>
<dbReference type="CORUM" id="P30051"/>
<dbReference type="DIP" id="DIP-41748N"/>
<dbReference type="FunCoup" id="P30051">
    <property type="interactions" value="1327"/>
</dbReference>
<dbReference type="IntAct" id="P30051">
    <property type="interactions" value="2"/>
</dbReference>
<dbReference type="MINT" id="P30051"/>
<dbReference type="STRING" id="10090.ENSMUSP00000060671"/>
<dbReference type="iPTMnet" id="P30051"/>
<dbReference type="PhosphoSitePlus" id="P30051"/>
<dbReference type="SwissPalm" id="P30051"/>
<dbReference type="PaxDb" id="10090-ENSMUSP00000060671"/>
<dbReference type="ProteomicsDB" id="263267"/>
<dbReference type="Pumba" id="P30051"/>
<dbReference type="DNASU" id="21676"/>
<dbReference type="GeneID" id="21676"/>
<dbReference type="UCSC" id="uc009jgz.2">
    <property type="organism name" value="mouse"/>
</dbReference>
<dbReference type="AGR" id="MGI:101876"/>
<dbReference type="MGI" id="MGI:101876">
    <property type="gene designation" value="Tead1"/>
</dbReference>
<dbReference type="eggNOG" id="KOG3841">
    <property type="taxonomic scope" value="Eukaryota"/>
</dbReference>
<dbReference type="InParanoid" id="P30051"/>
<dbReference type="PhylomeDB" id="P30051"/>
<dbReference type="Reactome" id="R-MMU-2032785">
    <property type="pathway name" value="YAP1- and WWTR1 (TAZ)-stimulated gene expression"/>
</dbReference>
<dbReference type="Reactome" id="R-MMU-8951671">
    <property type="pathway name" value="RUNX3 regulates YAP1-mediated transcription"/>
</dbReference>
<dbReference type="BioGRID-ORCS" id="21676">
    <property type="hits" value="7 hits in 79 CRISPR screens"/>
</dbReference>
<dbReference type="ChiTaRS" id="Tead1">
    <property type="organism name" value="mouse"/>
</dbReference>
<dbReference type="PRO" id="PR:P30051"/>
<dbReference type="Proteomes" id="UP000000589">
    <property type="component" value="Unplaced"/>
</dbReference>
<dbReference type="RNAct" id="P30051">
    <property type="molecule type" value="protein"/>
</dbReference>
<dbReference type="GO" id="GO:0005634">
    <property type="term" value="C:nucleus"/>
    <property type="evidence" value="ECO:0000314"/>
    <property type="project" value="ComplexPortal"/>
</dbReference>
<dbReference type="GO" id="GO:0140552">
    <property type="term" value="C:TEAD-YAP complex"/>
    <property type="evidence" value="ECO:0000353"/>
    <property type="project" value="ComplexPortal"/>
</dbReference>
<dbReference type="GO" id="GO:0005667">
    <property type="term" value="C:transcription regulator complex"/>
    <property type="evidence" value="ECO:0000314"/>
    <property type="project" value="MGI"/>
</dbReference>
<dbReference type="GO" id="GO:0003700">
    <property type="term" value="F:DNA-binding transcription factor activity"/>
    <property type="evidence" value="ECO:0000314"/>
    <property type="project" value="MGI"/>
</dbReference>
<dbReference type="GO" id="GO:0000978">
    <property type="term" value="F:RNA polymerase II cis-regulatory region sequence-specific DNA binding"/>
    <property type="evidence" value="ECO:0000314"/>
    <property type="project" value="MGI"/>
</dbReference>
<dbReference type="GO" id="GO:0071300">
    <property type="term" value="P:cellular response to retinoic acid"/>
    <property type="evidence" value="ECO:0000314"/>
    <property type="project" value="MGI"/>
</dbReference>
<dbReference type="GO" id="GO:0003143">
    <property type="term" value="P:embryonic heart tube morphogenesis"/>
    <property type="evidence" value="ECO:0000316"/>
    <property type="project" value="MGI"/>
</dbReference>
<dbReference type="GO" id="GO:0007507">
    <property type="term" value="P:heart development"/>
    <property type="evidence" value="ECO:0000315"/>
    <property type="project" value="MGI"/>
</dbReference>
<dbReference type="GO" id="GO:0035329">
    <property type="term" value="P:hippo signaling"/>
    <property type="evidence" value="ECO:0000316"/>
    <property type="project" value="MGI"/>
</dbReference>
<dbReference type="GO" id="GO:0048368">
    <property type="term" value="P:lateral mesoderm development"/>
    <property type="evidence" value="ECO:0000316"/>
    <property type="project" value="MGI"/>
</dbReference>
<dbReference type="GO" id="GO:0030903">
    <property type="term" value="P:notochord development"/>
    <property type="evidence" value="ECO:0000316"/>
    <property type="project" value="MGI"/>
</dbReference>
<dbReference type="GO" id="GO:0048339">
    <property type="term" value="P:paraxial mesoderm development"/>
    <property type="evidence" value="ECO:0000316"/>
    <property type="project" value="MGI"/>
</dbReference>
<dbReference type="GO" id="GO:0030307">
    <property type="term" value="P:positive regulation of cell growth"/>
    <property type="evidence" value="ECO:0000266"/>
    <property type="project" value="ComplexPortal"/>
</dbReference>
<dbReference type="GO" id="GO:0045893">
    <property type="term" value="P:positive regulation of DNA-templated transcription"/>
    <property type="evidence" value="ECO:0000314"/>
    <property type="project" value="MGI"/>
</dbReference>
<dbReference type="GO" id="GO:1902459">
    <property type="term" value="P:positive regulation of stem cell population maintenance"/>
    <property type="evidence" value="ECO:0000316"/>
    <property type="project" value="MGI"/>
</dbReference>
<dbReference type="GO" id="GO:0045944">
    <property type="term" value="P:positive regulation of transcription by RNA polymerase II"/>
    <property type="evidence" value="ECO:0000314"/>
    <property type="project" value="ComplexPortal"/>
</dbReference>
<dbReference type="GO" id="GO:0042127">
    <property type="term" value="P:regulation of cell population proliferation"/>
    <property type="evidence" value="ECO:0000316"/>
    <property type="project" value="MGI"/>
</dbReference>
<dbReference type="GO" id="GO:0006355">
    <property type="term" value="P:regulation of DNA-templated transcription"/>
    <property type="evidence" value="ECO:0000314"/>
    <property type="project" value="MGI"/>
</dbReference>
<dbReference type="GO" id="GO:0010468">
    <property type="term" value="P:regulation of gene expression"/>
    <property type="evidence" value="ECO:0000316"/>
    <property type="project" value="MGI"/>
</dbReference>
<dbReference type="GO" id="GO:0014883">
    <property type="term" value="P:transition between fast and slow fiber"/>
    <property type="evidence" value="ECO:0000314"/>
    <property type="project" value="MGI"/>
</dbReference>
<dbReference type="FunFam" id="2.70.50.80:FF:000001">
    <property type="entry name" value="Transcriptional enhancer factor TEF-1, putative"/>
    <property type="match status" value="1"/>
</dbReference>
<dbReference type="Gene3D" id="2.70.50.80">
    <property type="match status" value="1"/>
</dbReference>
<dbReference type="Gene3D" id="6.10.20.40">
    <property type="entry name" value="TEA/ATTS domain"/>
    <property type="match status" value="1"/>
</dbReference>
<dbReference type="InterPro" id="IPR000818">
    <property type="entry name" value="TEA/ATTS_dom"/>
</dbReference>
<dbReference type="InterPro" id="IPR038096">
    <property type="entry name" value="TEA/ATTS_sf"/>
</dbReference>
<dbReference type="InterPro" id="IPR050937">
    <property type="entry name" value="TEC1_TEAD_TF"/>
</dbReference>
<dbReference type="InterPro" id="IPR016361">
    <property type="entry name" value="TEF_metazoa"/>
</dbReference>
<dbReference type="InterPro" id="IPR041086">
    <property type="entry name" value="YBD"/>
</dbReference>
<dbReference type="PANTHER" id="PTHR11834">
    <property type="entry name" value="TRANSCRIPTIONAL ENHANCER FACTOR TEF RELATED"/>
    <property type="match status" value="1"/>
</dbReference>
<dbReference type="PANTHER" id="PTHR11834:SF4">
    <property type="entry name" value="TRANSCRIPTIONAL ENHANCER FACTOR TEF-1"/>
    <property type="match status" value="1"/>
</dbReference>
<dbReference type="Pfam" id="PF01285">
    <property type="entry name" value="TEA"/>
    <property type="match status" value="1"/>
</dbReference>
<dbReference type="Pfam" id="PF17725">
    <property type="entry name" value="YBD"/>
    <property type="match status" value="1"/>
</dbReference>
<dbReference type="PIRSF" id="PIRSF002603">
    <property type="entry name" value="TEF"/>
    <property type="match status" value="1"/>
</dbReference>
<dbReference type="PRINTS" id="PR00065">
    <property type="entry name" value="TEADOMAIN"/>
</dbReference>
<dbReference type="SMART" id="SM00426">
    <property type="entry name" value="TEA"/>
    <property type="match status" value="1"/>
</dbReference>
<dbReference type="PROSITE" id="PS00554">
    <property type="entry name" value="TEA_1"/>
    <property type="match status" value="1"/>
</dbReference>
<dbReference type="PROSITE" id="PS51088">
    <property type="entry name" value="TEA_2"/>
    <property type="match status" value="1"/>
</dbReference>
<keyword id="KW-0007">Acetylation</keyword>
<keyword id="KW-0010">Activator</keyword>
<keyword id="KW-0238">DNA-binding</keyword>
<keyword id="KW-0539">Nucleus</keyword>
<keyword id="KW-0597">Phosphoprotein</keyword>
<keyword id="KW-1185">Reference proteome</keyword>
<keyword id="KW-0804">Transcription</keyword>
<keyword id="KW-0805">Transcription regulation</keyword>
<proteinExistence type="evidence at protein level"/>
<reference key="1">
    <citation type="journal article" date="1993" name="Nucleic Acids Res.">
        <title>Striking homology between mouse and human transcription enhancer factor-1 (TEF-1).</title>
        <authorList>
            <person name="Blatt C."/>
            <person name="Depamphilis M.L."/>
        </authorList>
    </citation>
    <scope>NUCLEOTIDE SEQUENCE [MRNA]</scope>
</reference>
<reference key="2">
    <citation type="journal article" date="1993" name="Nucleic Acids Res.">
        <title>Both a ubiquitous factor mTEF-1 and a distinct muscle-specific factor bind to the M-CAT motif of the myosin heavy chain beta gene.</title>
        <authorList>
            <person name="Shimizu N.N."/>
            <person name="Smith G."/>
            <person name="Izumo S."/>
        </authorList>
    </citation>
    <scope>NUCLEOTIDE SEQUENCE [MRNA]</scope>
    <source>
        <strain>BALB/cJ</strain>
        <tissue>Heart</tissue>
    </source>
</reference>
<reference key="3">
    <citation type="journal article" date="1994" name="Genes Dev.">
        <title>Transcriptional enhancer factor 1 disruption by a retroviral gene trap leads to heart defects and embryonic lethality in mice.</title>
        <authorList>
            <person name="Chen Z."/>
            <person name="Friedrich G.A."/>
            <person name="Soriano P."/>
        </authorList>
    </citation>
    <scope>NUCLEOTIDE SEQUENCE [MRNA]</scope>
</reference>